<accession>A5EXU0</accession>
<dbReference type="EC" id="2.7.7.8" evidence="1"/>
<dbReference type="EMBL" id="CP000513">
    <property type="protein sequence ID" value="ABQ14284.1"/>
    <property type="molecule type" value="Genomic_DNA"/>
</dbReference>
<dbReference type="RefSeq" id="WP_012031354.1">
    <property type="nucleotide sequence ID" value="NC_009446.1"/>
</dbReference>
<dbReference type="SMR" id="A5EXU0"/>
<dbReference type="STRING" id="246195.DNO_1047"/>
<dbReference type="KEGG" id="dno:DNO_1047"/>
<dbReference type="eggNOG" id="COG1185">
    <property type="taxonomic scope" value="Bacteria"/>
</dbReference>
<dbReference type="HOGENOM" id="CLU_004217_2_2_6"/>
<dbReference type="OrthoDB" id="9804305at2"/>
<dbReference type="BRENDA" id="2.7.7.8">
    <property type="organism ID" value="11943"/>
</dbReference>
<dbReference type="Proteomes" id="UP000000248">
    <property type="component" value="Chromosome"/>
</dbReference>
<dbReference type="GO" id="GO:0005829">
    <property type="term" value="C:cytosol"/>
    <property type="evidence" value="ECO:0007669"/>
    <property type="project" value="TreeGrafter"/>
</dbReference>
<dbReference type="GO" id="GO:0000175">
    <property type="term" value="F:3'-5'-RNA exonuclease activity"/>
    <property type="evidence" value="ECO:0007669"/>
    <property type="project" value="TreeGrafter"/>
</dbReference>
<dbReference type="GO" id="GO:0000287">
    <property type="term" value="F:magnesium ion binding"/>
    <property type="evidence" value="ECO:0007669"/>
    <property type="project" value="UniProtKB-UniRule"/>
</dbReference>
<dbReference type="GO" id="GO:0004654">
    <property type="term" value="F:polyribonucleotide nucleotidyltransferase activity"/>
    <property type="evidence" value="ECO:0007669"/>
    <property type="project" value="UniProtKB-UniRule"/>
</dbReference>
<dbReference type="GO" id="GO:0003723">
    <property type="term" value="F:RNA binding"/>
    <property type="evidence" value="ECO:0007669"/>
    <property type="project" value="UniProtKB-UniRule"/>
</dbReference>
<dbReference type="GO" id="GO:0006402">
    <property type="term" value="P:mRNA catabolic process"/>
    <property type="evidence" value="ECO:0007669"/>
    <property type="project" value="UniProtKB-UniRule"/>
</dbReference>
<dbReference type="GO" id="GO:0006396">
    <property type="term" value="P:RNA processing"/>
    <property type="evidence" value="ECO:0007669"/>
    <property type="project" value="InterPro"/>
</dbReference>
<dbReference type="CDD" id="cd02393">
    <property type="entry name" value="KH-I_PNPase"/>
    <property type="match status" value="1"/>
</dbReference>
<dbReference type="CDD" id="cd11363">
    <property type="entry name" value="RNase_PH_PNPase_1"/>
    <property type="match status" value="1"/>
</dbReference>
<dbReference type="CDD" id="cd11364">
    <property type="entry name" value="RNase_PH_PNPase_2"/>
    <property type="match status" value="1"/>
</dbReference>
<dbReference type="CDD" id="cd04472">
    <property type="entry name" value="S1_PNPase"/>
    <property type="match status" value="1"/>
</dbReference>
<dbReference type="FunFam" id="2.40.50.140:FF:000023">
    <property type="entry name" value="Polyribonucleotide nucleotidyltransferase"/>
    <property type="match status" value="1"/>
</dbReference>
<dbReference type="FunFam" id="3.30.1370.10:FF:000001">
    <property type="entry name" value="Polyribonucleotide nucleotidyltransferase"/>
    <property type="match status" value="1"/>
</dbReference>
<dbReference type="FunFam" id="3.30.230.70:FF:000001">
    <property type="entry name" value="Polyribonucleotide nucleotidyltransferase"/>
    <property type="match status" value="1"/>
</dbReference>
<dbReference type="FunFam" id="3.30.230.70:FF:000002">
    <property type="entry name" value="Polyribonucleotide nucleotidyltransferase"/>
    <property type="match status" value="1"/>
</dbReference>
<dbReference type="Gene3D" id="3.30.230.70">
    <property type="entry name" value="GHMP Kinase, N-terminal domain"/>
    <property type="match status" value="2"/>
</dbReference>
<dbReference type="Gene3D" id="3.30.1370.10">
    <property type="entry name" value="K Homology domain, type 1"/>
    <property type="match status" value="1"/>
</dbReference>
<dbReference type="Gene3D" id="2.40.50.140">
    <property type="entry name" value="Nucleic acid-binding proteins"/>
    <property type="match status" value="1"/>
</dbReference>
<dbReference type="HAMAP" id="MF_01595">
    <property type="entry name" value="PNPase"/>
    <property type="match status" value="1"/>
</dbReference>
<dbReference type="InterPro" id="IPR001247">
    <property type="entry name" value="ExoRNase_PH_dom1"/>
</dbReference>
<dbReference type="InterPro" id="IPR015847">
    <property type="entry name" value="ExoRNase_PH_dom2"/>
</dbReference>
<dbReference type="InterPro" id="IPR036345">
    <property type="entry name" value="ExoRNase_PH_dom2_sf"/>
</dbReference>
<dbReference type="InterPro" id="IPR004087">
    <property type="entry name" value="KH_dom"/>
</dbReference>
<dbReference type="InterPro" id="IPR004088">
    <property type="entry name" value="KH_dom_type_1"/>
</dbReference>
<dbReference type="InterPro" id="IPR036612">
    <property type="entry name" value="KH_dom_type_1_sf"/>
</dbReference>
<dbReference type="InterPro" id="IPR012340">
    <property type="entry name" value="NA-bd_OB-fold"/>
</dbReference>
<dbReference type="InterPro" id="IPR012162">
    <property type="entry name" value="PNPase"/>
</dbReference>
<dbReference type="InterPro" id="IPR027408">
    <property type="entry name" value="PNPase/RNase_PH_dom_sf"/>
</dbReference>
<dbReference type="InterPro" id="IPR015848">
    <property type="entry name" value="PNPase_PH_RNA-bd_bac/org-type"/>
</dbReference>
<dbReference type="InterPro" id="IPR020568">
    <property type="entry name" value="Ribosomal_Su5_D2-typ_SF"/>
</dbReference>
<dbReference type="InterPro" id="IPR003029">
    <property type="entry name" value="S1_domain"/>
</dbReference>
<dbReference type="NCBIfam" id="TIGR03591">
    <property type="entry name" value="polynuc_phos"/>
    <property type="match status" value="1"/>
</dbReference>
<dbReference type="NCBIfam" id="NF008805">
    <property type="entry name" value="PRK11824.1"/>
    <property type="match status" value="1"/>
</dbReference>
<dbReference type="PANTHER" id="PTHR11252">
    <property type="entry name" value="POLYRIBONUCLEOTIDE NUCLEOTIDYLTRANSFERASE"/>
    <property type="match status" value="1"/>
</dbReference>
<dbReference type="PANTHER" id="PTHR11252:SF0">
    <property type="entry name" value="POLYRIBONUCLEOTIDE NUCLEOTIDYLTRANSFERASE 1, MITOCHONDRIAL"/>
    <property type="match status" value="1"/>
</dbReference>
<dbReference type="Pfam" id="PF00013">
    <property type="entry name" value="KH_1"/>
    <property type="match status" value="1"/>
</dbReference>
<dbReference type="Pfam" id="PF03726">
    <property type="entry name" value="PNPase"/>
    <property type="match status" value="1"/>
</dbReference>
<dbReference type="Pfam" id="PF01138">
    <property type="entry name" value="RNase_PH"/>
    <property type="match status" value="2"/>
</dbReference>
<dbReference type="Pfam" id="PF03725">
    <property type="entry name" value="RNase_PH_C"/>
    <property type="match status" value="2"/>
</dbReference>
<dbReference type="Pfam" id="PF00575">
    <property type="entry name" value="S1"/>
    <property type="match status" value="1"/>
</dbReference>
<dbReference type="PIRSF" id="PIRSF005499">
    <property type="entry name" value="PNPase"/>
    <property type="match status" value="1"/>
</dbReference>
<dbReference type="SMART" id="SM00322">
    <property type="entry name" value="KH"/>
    <property type="match status" value="1"/>
</dbReference>
<dbReference type="SMART" id="SM00316">
    <property type="entry name" value="S1"/>
    <property type="match status" value="1"/>
</dbReference>
<dbReference type="SUPFAM" id="SSF54791">
    <property type="entry name" value="Eukaryotic type KH-domain (KH-domain type I)"/>
    <property type="match status" value="1"/>
</dbReference>
<dbReference type="SUPFAM" id="SSF50249">
    <property type="entry name" value="Nucleic acid-binding proteins"/>
    <property type="match status" value="1"/>
</dbReference>
<dbReference type="SUPFAM" id="SSF55666">
    <property type="entry name" value="Ribonuclease PH domain 2-like"/>
    <property type="match status" value="2"/>
</dbReference>
<dbReference type="SUPFAM" id="SSF54211">
    <property type="entry name" value="Ribosomal protein S5 domain 2-like"/>
    <property type="match status" value="2"/>
</dbReference>
<dbReference type="PROSITE" id="PS50084">
    <property type="entry name" value="KH_TYPE_1"/>
    <property type="match status" value="1"/>
</dbReference>
<dbReference type="PROSITE" id="PS50126">
    <property type="entry name" value="S1"/>
    <property type="match status" value="1"/>
</dbReference>
<proteinExistence type="inferred from homology"/>
<sequence>MKHSVSFTYGQHQVTLETGEIARQADGAVIVNMDDTIVLVTVVANKTVAEGQDFFPLTVDYQEKNYAAGKIPGGFFKREGRPSEEETLISRLIDRPIRPLFADGFLNEVQIIATVLSYNPEVSPDIPSIIGASAALKLSGLPFNGPIAAARVGYVNDAYVLNPSPKALKNSRLDLVVAGTESAVLMVESEADQLSEAVMLEAVMFGHRQQQVVIKSINELAAQAAKPAWAWQSPARDEQLDTEVKNHFEERLVAAYQIAHKQTRQETVAQIHADAVALLGIQNNAHGWEETLVNEYVHHLAYRIVRDRILKKQPRIDGRDTKTVRPITIHTSVLPRAHGSALFTRGETQALVVATLGTGRDAQLLDTLDGEVRDNFMLHYNFLPFSVGEIGRIGSPKRREIGHGRLARRGLSAVLPLEEDFPYTIRVVSEITESNGSSSMASVCGSSLALMDAGVPVQTPVAGIAMGLIKEGDEFAILTDILGDEDHLGDMDFKVAGSATGVTALQMDIKINGITEEIMRQALSQAHEGRLHILEVMNQAIAAPRAELSDYAPRFSSMRIDTEKIKDVIGKGGATIRSITEQTGTTIEIEDDGSVKIAATDKAAAANARRLIEEIVAEPEIGRIYDAKVTKITDFGAFLQFLPGKEGLVHISQIADYRVNDVRDELTEGQEVKVKLLEIDRQGRVRLSIKEAK</sequence>
<evidence type="ECO:0000255" key="1">
    <source>
        <dbReference type="HAMAP-Rule" id="MF_01595"/>
    </source>
</evidence>
<name>PNP_DICNV</name>
<keyword id="KW-0963">Cytoplasm</keyword>
<keyword id="KW-0460">Magnesium</keyword>
<keyword id="KW-0479">Metal-binding</keyword>
<keyword id="KW-0548">Nucleotidyltransferase</keyword>
<keyword id="KW-1185">Reference proteome</keyword>
<keyword id="KW-0694">RNA-binding</keyword>
<keyword id="KW-0808">Transferase</keyword>
<feature type="chain" id="PRO_0000329628" description="Polyribonucleotide nucleotidyltransferase">
    <location>
        <begin position="1"/>
        <end position="693"/>
    </location>
</feature>
<feature type="domain" description="KH" evidence="1">
    <location>
        <begin position="553"/>
        <end position="612"/>
    </location>
</feature>
<feature type="domain" description="S1 motif" evidence="1">
    <location>
        <begin position="622"/>
        <end position="690"/>
    </location>
</feature>
<feature type="binding site" evidence="1">
    <location>
        <position position="486"/>
    </location>
    <ligand>
        <name>Mg(2+)</name>
        <dbReference type="ChEBI" id="CHEBI:18420"/>
    </ligand>
</feature>
<feature type="binding site" evidence="1">
    <location>
        <position position="492"/>
    </location>
    <ligand>
        <name>Mg(2+)</name>
        <dbReference type="ChEBI" id="CHEBI:18420"/>
    </ligand>
</feature>
<gene>
    <name evidence="1" type="primary">pnp</name>
    <name type="ordered locus">DNO_1047</name>
</gene>
<organism>
    <name type="scientific">Dichelobacter nodosus (strain VCS1703A)</name>
    <dbReference type="NCBI Taxonomy" id="246195"/>
    <lineage>
        <taxon>Bacteria</taxon>
        <taxon>Pseudomonadati</taxon>
        <taxon>Pseudomonadota</taxon>
        <taxon>Gammaproteobacteria</taxon>
        <taxon>Cardiobacteriales</taxon>
        <taxon>Cardiobacteriaceae</taxon>
        <taxon>Dichelobacter</taxon>
    </lineage>
</organism>
<comment type="function">
    <text evidence="1">Involved in mRNA degradation. Catalyzes the phosphorolysis of single-stranded polyribonucleotides processively in the 3'- to 5'-direction.</text>
</comment>
<comment type="catalytic activity">
    <reaction evidence="1">
        <text>RNA(n+1) + phosphate = RNA(n) + a ribonucleoside 5'-diphosphate</text>
        <dbReference type="Rhea" id="RHEA:22096"/>
        <dbReference type="Rhea" id="RHEA-COMP:14527"/>
        <dbReference type="Rhea" id="RHEA-COMP:17342"/>
        <dbReference type="ChEBI" id="CHEBI:43474"/>
        <dbReference type="ChEBI" id="CHEBI:57930"/>
        <dbReference type="ChEBI" id="CHEBI:140395"/>
        <dbReference type="EC" id="2.7.7.8"/>
    </reaction>
</comment>
<comment type="cofactor">
    <cofactor evidence="1">
        <name>Mg(2+)</name>
        <dbReference type="ChEBI" id="CHEBI:18420"/>
    </cofactor>
</comment>
<comment type="subunit">
    <text evidence="1">Component of the RNA degradosome, which is a multiprotein complex involved in RNA processing and mRNA degradation.</text>
</comment>
<comment type="subcellular location">
    <subcellularLocation>
        <location evidence="1">Cytoplasm</location>
    </subcellularLocation>
</comment>
<comment type="similarity">
    <text evidence="1">Belongs to the polyribonucleotide nucleotidyltransferase family.</text>
</comment>
<reference key="1">
    <citation type="journal article" date="2007" name="Nat. Biotechnol.">
        <title>Genome sequence and identification of candidate vaccine antigens from the animal pathogen Dichelobacter nodosus.</title>
        <authorList>
            <person name="Myers G.S.A."/>
            <person name="Parker D."/>
            <person name="Al-Hasani K."/>
            <person name="Kennan R.M."/>
            <person name="Seemann T."/>
            <person name="Ren Q."/>
            <person name="Badger J.H."/>
            <person name="Selengut J.D."/>
            <person name="Deboy R.T."/>
            <person name="Tettelin H."/>
            <person name="Boyce J.D."/>
            <person name="McCarl V.P."/>
            <person name="Han X."/>
            <person name="Nelson W.C."/>
            <person name="Madupu R."/>
            <person name="Mohamoud Y."/>
            <person name="Holley T."/>
            <person name="Fedorova N."/>
            <person name="Khouri H."/>
            <person name="Bottomley S.P."/>
            <person name="Whittington R.J."/>
            <person name="Adler B."/>
            <person name="Songer J.G."/>
            <person name="Rood J.I."/>
            <person name="Paulsen I.T."/>
        </authorList>
    </citation>
    <scope>NUCLEOTIDE SEQUENCE [LARGE SCALE GENOMIC DNA]</scope>
    <source>
        <strain>VCS1703A</strain>
    </source>
</reference>
<protein>
    <recommendedName>
        <fullName evidence="1">Polyribonucleotide nucleotidyltransferase</fullName>
        <ecNumber evidence="1">2.7.7.8</ecNumber>
    </recommendedName>
    <alternativeName>
        <fullName evidence="1">Polynucleotide phosphorylase</fullName>
        <shortName evidence="1">PNPase</shortName>
    </alternativeName>
</protein>